<evidence type="ECO:0000255" key="1">
    <source>
        <dbReference type="HAMAP-Rule" id="MF_00772"/>
    </source>
</evidence>
<dbReference type="EC" id="2.1.1.63" evidence="1"/>
<dbReference type="EMBL" id="CP000077">
    <property type="protein sequence ID" value="AAY80605.1"/>
    <property type="molecule type" value="Genomic_DNA"/>
</dbReference>
<dbReference type="RefSeq" id="WP_011278107.1">
    <property type="nucleotide sequence ID" value="NC_007181.1"/>
</dbReference>
<dbReference type="SMR" id="Q4J9C6"/>
<dbReference type="STRING" id="330779.Saci_1260"/>
<dbReference type="GeneID" id="14551765"/>
<dbReference type="KEGG" id="sai:Saci_1260"/>
<dbReference type="PATRIC" id="fig|330779.12.peg.1221"/>
<dbReference type="eggNOG" id="arCOG02724">
    <property type="taxonomic scope" value="Archaea"/>
</dbReference>
<dbReference type="HOGENOM" id="CLU_000445_52_2_2"/>
<dbReference type="Proteomes" id="UP000001018">
    <property type="component" value="Chromosome"/>
</dbReference>
<dbReference type="GO" id="GO:0005737">
    <property type="term" value="C:cytoplasm"/>
    <property type="evidence" value="ECO:0007669"/>
    <property type="project" value="UniProtKB-SubCell"/>
</dbReference>
<dbReference type="GO" id="GO:0003908">
    <property type="term" value="F:methylated-DNA-[protein]-cysteine S-methyltransferase activity"/>
    <property type="evidence" value="ECO:0007669"/>
    <property type="project" value="UniProtKB-UniRule"/>
</dbReference>
<dbReference type="GO" id="GO:0006307">
    <property type="term" value="P:DNA alkylation repair"/>
    <property type="evidence" value="ECO:0007669"/>
    <property type="project" value="UniProtKB-UniRule"/>
</dbReference>
<dbReference type="GO" id="GO:0032259">
    <property type="term" value="P:methylation"/>
    <property type="evidence" value="ECO:0007669"/>
    <property type="project" value="UniProtKB-KW"/>
</dbReference>
<dbReference type="CDD" id="cd06445">
    <property type="entry name" value="ATase"/>
    <property type="match status" value="1"/>
</dbReference>
<dbReference type="Gene3D" id="3.30.160.70">
    <property type="entry name" value="Methylated DNA-protein cysteine methyltransferase domain"/>
    <property type="match status" value="1"/>
</dbReference>
<dbReference type="Gene3D" id="1.10.10.10">
    <property type="entry name" value="Winged helix-like DNA-binding domain superfamily/Winged helix DNA-binding domain"/>
    <property type="match status" value="1"/>
</dbReference>
<dbReference type="HAMAP" id="MF_00772">
    <property type="entry name" value="OGT"/>
    <property type="match status" value="1"/>
</dbReference>
<dbReference type="InterPro" id="IPR001497">
    <property type="entry name" value="MethylDNA_cys_MeTrfase_AS"/>
</dbReference>
<dbReference type="InterPro" id="IPR014048">
    <property type="entry name" value="MethylDNA_cys_MeTrfase_DNA-bd"/>
</dbReference>
<dbReference type="InterPro" id="IPR036217">
    <property type="entry name" value="MethylDNA_cys_MeTrfase_DNAb"/>
</dbReference>
<dbReference type="InterPro" id="IPR008332">
    <property type="entry name" value="MethylG_MeTrfase_N"/>
</dbReference>
<dbReference type="InterPro" id="IPR023546">
    <property type="entry name" value="MGMT"/>
</dbReference>
<dbReference type="InterPro" id="IPR036631">
    <property type="entry name" value="MGMT_N_sf"/>
</dbReference>
<dbReference type="InterPro" id="IPR036388">
    <property type="entry name" value="WH-like_DNA-bd_sf"/>
</dbReference>
<dbReference type="NCBIfam" id="TIGR00589">
    <property type="entry name" value="ogt"/>
    <property type="match status" value="1"/>
</dbReference>
<dbReference type="PANTHER" id="PTHR10815">
    <property type="entry name" value="METHYLATED-DNA--PROTEIN-CYSTEINE METHYLTRANSFERASE"/>
    <property type="match status" value="1"/>
</dbReference>
<dbReference type="PANTHER" id="PTHR10815:SF13">
    <property type="entry name" value="METHYLATED-DNA--PROTEIN-CYSTEINE METHYLTRANSFERASE"/>
    <property type="match status" value="1"/>
</dbReference>
<dbReference type="Pfam" id="PF01035">
    <property type="entry name" value="DNA_binding_1"/>
    <property type="match status" value="1"/>
</dbReference>
<dbReference type="Pfam" id="PF02870">
    <property type="entry name" value="Methyltransf_1N"/>
    <property type="match status" value="1"/>
</dbReference>
<dbReference type="SUPFAM" id="SSF53155">
    <property type="entry name" value="Methylated DNA-protein cysteine methyltransferase domain"/>
    <property type="match status" value="1"/>
</dbReference>
<dbReference type="SUPFAM" id="SSF46767">
    <property type="entry name" value="Methylated DNA-protein cysteine methyltransferase, C-terminal domain"/>
    <property type="match status" value="1"/>
</dbReference>
<dbReference type="PROSITE" id="PS00374">
    <property type="entry name" value="MGMT"/>
    <property type="match status" value="1"/>
</dbReference>
<name>OGT_SULAC</name>
<organism>
    <name type="scientific">Sulfolobus acidocaldarius (strain ATCC 33909 / DSM 639 / JCM 8929 / NBRC 15157 / NCIMB 11770)</name>
    <dbReference type="NCBI Taxonomy" id="330779"/>
    <lineage>
        <taxon>Archaea</taxon>
        <taxon>Thermoproteota</taxon>
        <taxon>Thermoprotei</taxon>
        <taxon>Sulfolobales</taxon>
        <taxon>Sulfolobaceae</taxon>
        <taxon>Sulfolobus</taxon>
    </lineage>
</organism>
<proteinExistence type="inferred from homology"/>
<feature type="chain" id="PRO_0000139386" description="Methylated-DNA--protein-cysteine methyltransferase">
    <location>
        <begin position="1"/>
        <end position="155"/>
    </location>
</feature>
<feature type="active site" description="Nucleophile; methyl group acceptor" evidence="1">
    <location>
        <position position="119"/>
    </location>
</feature>
<comment type="function">
    <text evidence="1">Involved in the cellular defense against the biological effects of O6-methylguanine (O6-MeG) and O4-methylthymine (O4-MeT) in DNA. Repairs the methylated nucleobase in DNA by stoichiometrically transferring the methyl group to a cysteine residue in the enzyme. This is a suicide reaction: the enzyme is irreversibly inactivated.</text>
</comment>
<comment type="catalytic activity">
    <reaction evidence="1">
        <text>a 6-O-methyl-2'-deoxyguanosine in DNA + L-cysteinyl-[protein] = S-methyl-L-cysteinyl-[protein] + a 2'-deoxyguanosine in DNA</text>
        <dbReference type="Rhea" id="RHEA:24000"/>
        <dbReference type="Rhea" id="RHEA-COMP:10131"/>
        <dbReference type="Rhea" id="RHEA-COMP:10132"/>
        <dbReference type="Rhea" id="RHEA-COMP:11367"/>
        <dbReference type="Rhea" id="RHEA-COMP:11368"/>
        <dbReference type="ChEBI" id="CHEBI:29950"/>
        <dbReference type="ChEBI" id="CHEBI:82612"/>
        <dbReference type="ChEBI" id="CHEBI:85445"/>
        <dbReference type="ChEBI" id="CHEBI:85448"/>
        <dbReference type="EC" id="2.1.1.63"/>
    </reaction>
</comment>
<comment type="catalytic activity">
    <reaction evidence="1">
        <text>a 4-O-methyl-thymidine in DNA + L-cysteinyl-[protein] = a thymidine in DNA + S-methyl-L-cysteinyl-[protein]</text>
        <dbReference type="Rhea" id="RHEA:53428"/>
        <dbReference type="Rhea" id="RHEA-COMP:10131"/>
        <dbReference type="Rhea" id="RHEA-COMP:10132"/>
        <dbReference type="Rhea" id="RHEA-COMP:13555"/>
        <dbReference type="Rhea" id="RHEA-COMP:13556"/>
        <dbReference type="ChEBI" id="CHEBI:29950"/>
        <dbReference type="ChEBI" id="CHEBI:82612"/>
        <dbReference type="ChEBI" id="CHEBI:137386"/>
        <dbReference type="ChEBI" id="CHEBI:137387"/>
        <dbReference type="EC" id="2.1.1.63"/>
    </reaction>
</comment>
<comment type="subcellular location">
    <subcellularLocation>
        <location evidence="1">Cytoplasm</location>
    </subcellularLocation>
</comment>
<comment type="miscellaneous">
    <text>This enzyme catalyzes only one turnover and therefore is not strictly catalytic. According to one definition, an enzyme is a biocatalyst that acts repeatedly and over many reaction cycles.</text>
</comment>
<comment type="similarity">
    <text evidence="1">Belongs to the MGMT family.</text>
</comment>
<sequence length="155" mass="17556">MIVYGVYNSPLGTITVAKNERGIIMLDFCDCAERNLVDNSTFTDLFHKFDNYFQGKPVEFNETVDLFVNNFRRRVFNEVRRIGWGKVKTYKEIAETLKTSPRAVGMALSKNPVLLIIPCHRIIAESGLGGFSRGIELKKKLLELEGVNIEALVRG</sequence>
<keyword id="KW-0963">Cytoplasm</keyword>
<keyword id="KW-0227">DNA damage</keyword>
<keyword id="KW-0234">DNA repair</keyword>
<keyword id="KW-0489">Methyltransferase</keyword>
<keyword id="KW-1185">Reference proteome</keyword>
<keyword id="KW-0808">Transferase</keyword>
<gene>
    <name evidence="1" type="primary">ogt</name>
    <name type="ordered locus">Saci_1260</name>
</gene>
<protein>
    <recommendedName>
        <fullName evidence="1">Methylated-DNA--protein-cysteine methyltransferase</fullName>
        <ecNumber evidence="1">2.1.1.63</ecNumber>
    </recommendedName>
    <alternativeName>
        <fullName evidence="1">6-O-methylguanine-DNA methyltransferase</fullName>
        <shortName evidence="1">MGMT</shortName>
    </alternativeName>
    <alternativeName>
        <fullName evidence="1">O-6-methylguanine-DNA-alkyltransferase</fullName>
    </alternativeName>
</protein>
<reference key="1">
    <citation type="journal article" date="2005" name="J. Bacteriol.">
        <title>The genome of Sulfolobus acidocaldarius, a model organism of the Crenarchaeota.</title>
        <authorList>
            <person name="Chen L."/>
            <person name="Bruegger K."/>
            <person name="Skovgaard M."/>
            <person name="Redder P."/>
            <person name="She Q."/>
            <person name="Torarinsson E."/>
            <person name="Greve B."/>
            <person name="Awayez M."/>
            <person name="Zibat A."/>
            <person name="Klenk H.-P."/>
            <person name="Garrett R.A."/>
        </authorList>
    </citation>
    <scope>NUCLEOTIDE SEQUENCE [LARGE SCALE GENOMIC DNA]</scope>
    <source>
        <strain>ATCC 33909 / DSM 639 / JCM 8929 / NBRC 15157 / NCIMB 11770</strain>
    </source>
</reference>
<accession>Q4J9C6</accession>